<accession>Q4JT79</accession>
<reference key="1">
    <citation type="journal article" date="2005" name="J. Bacteriol.">
        <title>Complete genome sequence and analysis of the multiresistant nosocomial pathogen Corynebacterium jeikeium K411, a lipid-requiring bacterium of the human skin flora.</title>
        <authorList>
            <person name="Tauch A."/>
            <person name="Kaiser O."/>
            <person name="Hain T."/>
            <person name="Goesmann A."/>
            <person name="Weisshaar B."/>
            <person name="Albersmeier A."/>
            <person name="Bekel T."/>
            <person name="Bischoff N."/>
            <person name="Brune I."/>
            <person name="Chakraborty T."/>
            <person name="Kalinowski J."/>
            <person name="Meyer F."/>
            <person name="Rupp O."/>
            <person name="Schneiker S."/>
            <person name="Viehoever P."/>
            <person name="Puehler A."/>
        </authorList>
    </citation>
    <scope>NUCLEOTIDE SEQUENCE [LARGE SCALE GENOMIC DNA]</scope>
    <source>
        <strain>K411</strain>
    </source>
</reference>
<keyword id="KW-1185">Reference proteome</keyword>
<keyword id="KW-0687">Ribonucleoprotein</keyword>
<keyword id="KW-0689">Ribosomal protein</keyword>
<keyword id="KW-0694">RNA-binding</keyword>
<keyword id="KW-0699">rRNA-binding</keyword>
<sequence length="123" mass="13234">MIQQESRLRVADNTGAREILVIRPLGGSVRRSAGIGDVVVATVKEAAPGGTVKAGDIVKAVIVRAKKETRRPDGSYIAFDENAAVIIKANDNDPRGTRIFGPVARELRDKKFMKIVSLAPEVL</sequence>
<organism>
    <name type="scientific">Corynebacterium jeikeium (strain K411)</name>
    <dbReference type="NCBI Taxonomy" id="306537"/>
    <lineage>
        <taxon>Bacteria</taxon>
        <taxon>Bacillati</taxon>
        <taxon>Actinomycetota</taxon>
        <taxon>Actinomycetes</taxon>
        <taxon>Mycobacteriales</taxon>
        <taxon>Corynebacteriaceae</taxon>
        <taxon>Corynebacterium</taxon>
    </lineage>
</organism>
<comment type="function">
    <text evidence="1">Binds to 23S rRNA. Forms part of two intersubunit bridges in the 70S ribosome.</text>
</comment>
<comment type="subunit">
    <text evidence="1">Part of the 50S ribosomal subunit. Forms a cluster with proteins L3 and L19. In the 70S ribosome, L14 and L19 interact and together make contacts with the 16S rRNA in bridges B5 and B8.</text>
</comment>
<comment type="similarity">
    <text evidence="1">Belongs to the universal ribosomal protein uL14 family.</text>
</comment>
<proteinExistence type="inferred from homology"/>
<dbReference type="EMBL" id="CR931997">
    <property type="protein sequence ID" value="CAI37978.1"/>
    <property type="molecule type" value="Genomic_DNA"/>
</dbReference>
<dbReference type="RefSeq" id="WP_005291942.1">
    <property type="nucleotide sequence ID" value="NC_007164.1"/>
</dbReference>
<dbReference type="SMR" id="Q4JT79"/>
<dbReference type="STRING" id="306537.jk1801"/>
<dbReference type="GeneID" id="92739440"/>
<dbReference type="KEGG" id="cjk:jk1801"/>
<dbReference type="eggNOG" id="COG0093">
    <property type="taxonomic scope" value="Bacteria"/>
</dbReference>
<dbReference type="HOGENOM" id="CLU_095071_2_1_11"/>
<dbReference type="OrthoDB" id="9806379at2"/>
<dbReference type="Proteomes" id="UP000000545">
    <property type="component" value="Chromosome"/>
</dbReference>
<dbReference type="GO" id="GO:0022625">
    <property type="term" value="C:cytosolic large ribosomal subunit"/>
    <property type="evidence" value="ECO:0007669"/>
    <property type="project" value="TreeGrafter"/>
</dbReference>
<dbReference type="GO" id="GO:0070180">
    <property type="term" value="F:large ribosomal subunit rRNA binding"/>
    <property type="evidence" value="ECO:0007669"/>
    <property type="project" value="TreeGrafter"/>
</dbReference>
<dbReference type="GO" id="GO:0003735">
    <property type="term" value="F:structural constituent of ribosome"/>
    <property type="evidence" value="ECO:0007669"/>
    <property type="project" value="InterPro"/>
</dbReference>
<dbReference type="GO" id="GO:0006412">
    <property type="term" value="P:translation"/>
    <property type="evidence" value="ECO:0007669"/>
    <property type="project" value="UniProtKB-UniRule"/>
</dbReference>
<dbReference type="CDD" id="cd00337">
    <property type="entry name" value="Ribosomal_uL14"/>
    <property type="match status" value="1"/>
</dbReference>
<dbReference type="FunFam" id="2.40.150.20:FF:000001">
    <property type="entry name" value="50S ribosomal protein L14"/>
    <property type="match status" value="1"/>
</dbReference>
<dbReference type="Gene3D" id="2.40.150.20">
    <property type="entry name" value="Ribosomal protein L14"/>
    <property type="match status" value="1"/>
</dbReference>
<dbReference type="HAMAP" id="MF_01367">
    <property type="entry name" value="Ribosomal_uL14"/>
    <property type="match status" value="1"/>
</dbReference>
<dbReference type="InterPro" id="IPR000218">
    <property type="entry name" value="Ribosomal_uL14"/>
</dbReference>
<dbReference type="InterPro" id="IPR005745">
    <property type="entry name" value="Ribosomal_uL14_bac-type"/>
</dbReference>
<dbReference type="InterPro" id="IPR019972">
    <property type="entry name" value="Ribosomal_uL14_CS"/>
</dbReference>
<dbReference type="InterPro" id="IPR036853">
    <property type="entry name" value="Ribosomal_uL14_sf"/>
</dbReference>
<dbReference type="NCBIfam" id="TIGR01067">
    <property type="entry name" value="rplN_bact"/>
    <property type="match status" value="1"/>
</dbReference>
<dbReference type="PANTHER" id="PTHR11761">
    <property type="entry name" value="50S/60S RIBOSOMAL PROTEIN L14/L23"/>
    <property type="match status" value="1"/>
</dbReference>
<dbReference type="PANTHER" id="PTHR11761:SF3">
    <property type="entry name" value="LARGE RIBOSOMAL SUBUNIT PROTEIN UL14M"/>
    <property type="match status" value="1"/>
</dbReference>
<dbReference type="Pfam" id="PF00238">
    <property type="entry name" value="Ribosomal_L14"/>
    <property type="match status" value="1"/>
</dbReference>
<dbReference type="SMART" id="SM01374">
    <property type="entry name" value="Ribosomal_L14"/>
    <property type="match status" value="1"/>
</dbReference>
<dbReference type="SUPFAM" id="SSF50193">
    <property type="entry name" value="Ribosomal protein L14"/>
    <property type="match status" value="1"/>
</dbReference>
<dbReference type="PROSITE" id="PS00049">
    <property type="entry name" value="RIBOSOMAL_L14"/>
    <property type="match status" value="1"/>
</dbReference>
<gene>
    <name evidence="1" type="primary">rplN</name>
    <name type="ordered locus">jk1801</name>
</gene>
<feature type="chain" id="PRO_1000055569" description="Large ribosomal subunit protein uL14">
    <location>
        <begin position="1"/>
        <end position="123"/>
    </location>
</feature>
<name>RL14_CORJK</name>
<protein>
    <recommendedName>
        <fullName evidence="1">Large ribosomal subunit protein uL14</fullName>
    </recommendedName>
    <alternativeName>
        <fullName evidence="2">50S ribosomal protein L14</fullName>
    </alternativeName>
</protein>
<evidence type="ECO:0000255" key="1">
    <source>
        <dbReference type="HAMAP-Rule" id="MF_01367"/>
    </source>
</evidence>
<evidence type="ECO:0000305" key="2"/>